<evidence type="ECO:0000255" key="1">
    <source>
        <dbReference type="HAMAP-Rule" id="MF_00178"/>
    </source>
</evidence>
<accession>Q8NQ53</accession>
<reference key="1">
    <citation type="journal article" date="2003" name="Appl. Microbiol. Biotechnol.">
        <title>The Corynebacterium glutamicum genome: features and impacts on biotechnological processes.</title>
        <authorList>
            <person name="Ikeda M."/>
            <person name="Nakagawa S."/>
        </authorList>
    </citation>
    <scope>NUCLEOTIDE SEQUENCE [LARGE SCALE GENOMIC DNA]</scope>
    <source>
        <strain>ATCC 13032 / DSM 20300 / JCM 1318 / BCRC 11384 / CCUG 27702 / LMG 3730 / NBRC 12168 / NCIMB 10025 / NRRL B-2784 / 534</strain>
    </source>
</reference>
<reference key="2">
    <citation type="journal article" date="2003" name="J. Biotechnol.">
        <title>The complete Corynebacterium glutamicum ATCC 13032 genome sequence and its impact on the production of L-aspartate-derived amino acids and vitamins.</title>
        <authorList>
            <person name="Kalinowski J."/>
            <person name="Bathe B."/>
            <person name="Bartels D."/>
            <person name="Bischoff N."/>
            <person name="Bott M."/>
            <person name="Burkovski A."/>
            <person name="Dusch N."/>
            <person name="Eggeling L."/>
            <person name="Eikmanns B.J."/>
            <person name="Gaigalat L."/>
            <person name="Goesmann A."/>
            <person name="Hartmann M."/>
            <person name="Huthmacher K."/>
            <person name="Kraemer R."/>
            <person name="Linke B."/>
            <person name="McHardy A.C."/>
            <person name="Meyer F."/>
            <person name="Moeckel B."/>
            <person name="Pfefferle W."/>
            <person name="Puehler A."/>
            <person name="Rey D.A."/>
            <person name="Rueckert C."/>
            <person name="Rupp O."/>
            <person name="Sahm H."/>
            <person name="Wendisch V.F."/>
            <person name="Wiegraebe I."/>
            <person name="Tauch A."/>
        </authorList>
    </citation>
    <scope>NUCLEOTIDE SEQUENCE [LARGE SCALE GENOMIC DNA]</scope>
    <source>
        <strain>ATCC 13032 / DSM 20300 / JCM 1318 / BCRC 11384 / CCUG 27702 / LMG 3730 / NBRC 12168 / NCIMB 10025 / NRRL B-2784 / 534</strain>
    </source>
</reference>
<organism>
    <name type="scientific">Corynebacterium glutamicum (strain ATCC 13032 / DSM 20300 / JCM 1318 / BCRC 11384 / CCUG 27702 / LMG 3730 / NBRC 12168 / NCIMB 10025 / NRRL B-2784 / 534)</name>
    <dbReference type="NCBI Taxonomy" id="196627"/>
    <lineage>
        <taxon>Bacteria</taxon>
        <taxon>Bacillati</taxon>
        <taxon>Actinomycetota</taxon>
        <taxon>Actinomycetes</taxon>
        <taxon>Mycobacteriales</taxon>
        <taxon>Corynebacteriaceae</taxon>
        <taxon>Corynebacterium</taxon>
    </lineage>
</organism>
<protein>
    <recommendedName>
        <fullName evidence="1">6,7-dimethyl-8-ribityllumazine synthase</fullName>
        <shortName evidence="1">DMRL synthase</shortName>
        <shortName evidence="1">LS</shortName>
        <shortName evidence="1">Lumazine synthase</shortName>
        <ecNumber evidence="1">2.5.1.78</ecNumber>
    </recommendedName>
</protein>
<feature type="chain" id="PRO_0000134749" description="6,7-dimethyl-8-ribityllumazine synthase">
    <location>
        <begin position="1"/>
        <end position="159"/>
    </location>
</feature>
<feature type="active site" description="Proton donor" evidence="1">
    <location>
        <position position="87"/>
    </location>
</feature>
<feature type="binding site" evidence="1">
    <location>
        <position position="26"/>
    </location>
    <ligand>
        <name>5-amino-6-(D-ribitylamino)uracil</name>
        <dbReference type="ChEBI" id="CHEBI:15934"/>
    </ligand>
</feature>
<feature type="binding site" evidence="1">
    <location>
        <begin position="57"/>
        <end position="59"/>
    </location>
    <ligand>
        <name>5-amino-6-(D-ribitylamino)uracil</name>
        <dbReference type="ChEBI" id="CHEBI:15934"/>
    </ligand>
</feature>
<feature type="binding site" evidence="1">
    <location>
        <begin position="79"/>
        <end position="81"/>
    </location>
    <ligand>
        <name>5-amino-6-(D-ribitylamino)uracil</name>
        <dbReference type="ChEBI" id="CHEBI:15934"/>
    </ligand>
</feature>
<feature type="binding site" evidence="1">
    <location>
        <begin position="84"/>
        <end position="85"/>
    </location>
    <ligand>
        <name>(2S)-2-hydroxy-3-oxobutyl phosphate</name>
        <dbReference type="ChEBI" id="CHEBI:58830"/>
    </ligand>
</feature>
<feature type="binding site" evidence="1">
    <location>
        <position position="112"/>
    </location>
    <ligand>
        <name>5-amino-6-(D-ribitylamino)uracil</name>
        <dbReference type="ChEBI" id="CHEBI:15934"/>
    </ligand>
</feature>
<feature type="binding site" evidence="1">
    <location>
        <position position="126"/>
    </location>
    <ligand>
        <name>(2S)-2-hydroxy-3-oxobutyl phosphate</name>
        <dbReference type="ChEBI" id="CHEBI:58830"/>
    </ligand>
</feature>
<comment type="function">
    <text evidence="1">Catalyzes the formation of 6,7-dimethyl-8-ribityllumazine by condensation of 5-amino-6-(D-ribitylamino)uracil with 3,4-dihydroxy-2-butanone 4-phosphate. This is the penultimate step in the biosynthesis of riboflavin.</text>
</comment>
<comment type="catalytic activity">
    <reaction evidence="1">
        <text>(2S)-2-hydroxy-3-oxobutyl phosphate + 5-amino-6-(D-ribitylamino)uracil = 6,7-dimethyl-8-(1-D-ribityl)lumazine + phosphate + 2 H2O + H(+)</text>
        <dbReference type="Rhea" id="RHEA:26152"/>
        <dbReference type="ChEBI" id="CHEBI:15377"/>
        <dbReference type="ChEBI" id="CHEBI:15378"/>
        <dbReference type="ChEBI" id="CHEBI:15934"/>
        <dbReference type="ChEBI" id="CHEBI:43474"/>
        <dbReference type="ChEBI" id="CHEBI:58201"/>
        <dbReference type="ChEBI" id="CHEBI:58830"/>
        <dbReference type="EC" id="2.5.1.78"/>
    </reaction>
</comment>
<comment type="pathway">
    <text evidence="1">Cofactor biosynthesis; riboflavin biosynthesis; riboflavin from 2-hydroxy-3-oxobutyl phosphate and 5-amino-6-(D-ribitylamino)uracil: step 1/2.</text>
</comment>
<comment type="similarity">
    <text evidence="1">Belongs to the DMRL synthase family.</text>
</comment>
<gene>
    <name evidence="1" type="primary">ribH</name>
    <name type="ordered locus">Cgl1594</name>
    <name type="ordered locus">cg1797</name>
</gene>
<proteinExistence type="inferred from homology"/>
<keyword id="KW-1185">Reference proteome</keyword>
<keyword id="KW-0686">Riboflavin biosynthesis</keyword>
<keyword id="KW-0808">Transferase</keyword>
<name>RISB_CORGL</name>
<sequence>MAKEGLPAVELPDASGLKVAVVTARWNAEICDRLHKHAVDAGRAAGATVSEYRVIGALELPVVVQELARTHDAVVALGCVVRGGTPHFDYVCDSVTEGLTRIALDTSTPIGNGVLTTNTEEQAVERSGGEGSVEDKGAEAMVAALDTALVLSQIRATEG</sequence>
<dbReference type="EC" id="2.5.1.78" evidence="1"/>
<dbReference type="EMBL" id="BA000036">
    <property type="protein sequence ID" value="BAB98987.1"/>
    <property type="molecule type" value="Genomic_DNA"/>
</dbReference>
<dbReference type="EMBL" id="BX927152">
    <property type="protein sequence ID" value="CAF21602.1"/>
    <property type="molecule type" value="Genomic_DNA"/>
</dbReference>
<dbReference type="RefSeq" id="NP_600808.1">
    <property type="nucleotide sequence ID" value="NC_003450.3"/>
</dbReference>
<dbReference type="RefSeq" id="WP_003856018.1">
    <property type="nucleotide sequence ID" value="NC_006958.1"/>
</dbReference>
<dbReference type="SMR" id="Q8NQ53"/>
<dbReference type="STRING" id="196627.cg1797"/>
<dbReference type="GeneID" id="1019562"/>
<dbReference type="KEGG" id="cgb:cg1797"/>
<dbReference type="KEGG" id="cgl:Cgl1594"/>
<dbReference type="PATRIC" id="fig|196627.13.peg.1556"/>
<dbReference type="eggNOG" id="COG0054">
    <property type="taxonomic scope" value="Bacteria"/>
</dbReference>
<dbReference type="HOGENOM" id="CLU_089358_1_2_11"/>
<dbReference type="OrthoDB" id="9809709at2"/>
<dbReference type="BioCyc" id="CORYNE:G18NG-11179-MONOMER"/>
<dbReference type="BRENDA" id="2.5.1.78">
    <property type="organism ID" value="960"/>
</dbReference>
<dbReference type="UniPathway" id="UPA00275">
    <property type="reaction ID" value="UER00404"/>
</dbReference>
<dbReference type="Proteomes" id="UP000000582">
    <property type="component" value="Chromosome"/>
</dbReference>
<dbReference type="Proteomes" id="UP000001009">
    <property type="component" value="Chromosome"/>
</dbReference>
<dbReference type="GO" id="GO:0005829">
    <property type="term" value="C:cytosol"/>
    <property type="evidence" value="ECO:0007669"/>
    <property type="project" value="TreeGrafter"/>
</dbReference>
<dbReference type="GO" id="GO:0009349">
    <property type="term" value="C:riboflavin synthase complex"/>
    <property type="evidence" value="ECO:0007669"/>
    <property type="project" value="InterPro"/>
</dbReference>
<dbReference type="GO" id="GO:0000906">
    <property type="term" value="F:6,7-dimethyl-8-ribityllumazine synthase activity"/>
    <property type="evidence" value="ECO:0007669"/>
    <property type="project" value="UniProtKB-UniRule"/>
</dbReference>
<dbReference type="GO" id="GO:0009231">
    <property type="term" value="P:riboflavin biosynthetic process"/>
    <property type="evidence" value="ECO:0007669"/>
    <property type="project" value="UniProtKB-UniRule"/>
</dbReference>
<dbReference type="CDD" id="cd09209">
    <property type="entry name" value="Lumazine_synthase-I"/>
    <property type="match status" value="1"/>
</dbReference>
<dbReference type="Gene3D" id="3.40.50.960">
    <property type="entry name" value="Lumazine/riboflavin synthase"/>
    <property type="match status" value="1"/>
</dbReference>
<dbReference type="HAMAP" id="MF_00178">
    <property type="entry name" value="Lumazine_synth"/>
    <property type="match status" value="1"/>
</dbReference>
<dbReference type="InterPro" id="IPR034964">
    <property type="entry name" value="LS"/>
</dbReference>
<dbReference type="InterPro" id="IPR002180">
    <property type="entry name" value="LS/RS"/>
</dbReference>
<dbReference type="InterPro" id="IPR036467">
    <property type="entry name" value="LS/RS_sf"/>
</dbReference>
<dbReference type="NCBIfam" id="TIGR00114">
    <property type="entry name" value="lumazine-synth"/>
    <property type="match status" value="1"/>
</dbReference>
<dbReference type="PANTHER" id="PTHR21058:SF0">
    <property type="entry name" value="6,7-DIMETHYL-8-RIBITYLLUMAZINE SYNTHASE"/>
    <property type="match status" value="1"/>
</dbReference>
<dbReference type="PANTHER" id="PTHR21058">
    <property type="entry name" value="6,7-DIMETHYL-8-RIBITYLLUMAZINE SYNTHASE DMRL SYNTHASE LUMAZINE SYNTHASE"/>
    <property type="match status" value="1"/>
</dbReference>
<dbReference type="Pfam" id="PF00885">
    <property type="entry name" value="DMRL_synthase"/>
    <property type="match status" value="1"/>
</dbReference>
<dbReference type="SUPFAM" id="SSF52121">
    <property type="entry name" value="Lumazine synthase"/>
    <property type="match status" value="1"/>
</dbReference>